<evidence type="ECO:0000250" key="1">
    <source>
        <dbReference type="UniProtKB" id="Q9VEX5"/>
    </source>
</evidence>
<evidence type="ECO:0000255" key="2"/>
<evidence type="ECO:0000256" key="3">
    <source>
        <dbReference type="SAM" id="MobiDB-lite"/>
    </source>
</evidence>
<evidence type="ECO:0000305" key="4"/>
<evidence type="ECO:0000312" key="5">
    <source>
        <dbReference type="EMBL" id="EAL28613.1"/>
    </source>
</evidence>
<protein>
    <recommendedName>
        <fullName>Protein asunder</fullName>
    </recommendedName>
    <alternativeName>
        <fullName evidence="1">Cell cycle regulator Mat89Bb</fullName>
    </alternativeName>
    <alternativeName>
        <fullName>Set apart in position or space protein</fullName>
    </alternativeName>
</protein>
<gene>
    <name type="primary">asun</name>
    <name type="synonym">Mat89Bb</name>
    <name type="ORF">GA19879</name>
</gene>
<feature type="chain" id="PRO_0000385345" description="Protein asunder">
    <location>
        <begin position="1"/>
        <end position="674"/>
    </location>
</feature>
<feature type="region of interest" description="Disordered" evidence="3">
    <location>
        <begin position="560"/>
        <end position="579"/>
    </location>
</feature>
<feature type="coiled-coil region" evidence="2">
    <location>
        <begin position="516"/>
        <end position="538"/>
    </location>
</feature>
<feature type="short sequence motif" description="Nuclear localization signal (NLS)" evidence="1">
    <location>
        <begin position="601"/>
        <end position="607"/>
    </location>
</feature>
<feature type="compositionally biased region" description="Polar residues" evidence="3">
    <location>
        <begin position="564"/>
        <end position="577"/>
    </location>
</feature>
<keyword id="KW-0131">Cell cycle</keyword>
<keyword id="KW-0132">Cell division</keyword>
<keyword id="KW-0175">Coiled coil</keyword>
<keyword id="KW-0963">Cytoplasm</keyword>
<keyword id="KW-0217">Developmental protein</keyword>
<keyword id="KW-0221">Differentiation</keyword>
<keyword id="KW-0469">Meiosis</keyword>
<keyword id="KW-0498">Mitosis</keyword>
<keyword id="KW-0539">Nucleus</keyword>
<keyword id="KW-0597">Phosphoprotein</keyword>
<keyword id="KW-1185">Reference proteome</keyword>
<keyword id="KW-0744">Spermatogenesis</keyword>
<comment type="function">
    <text evidence="1">Component of the integrator complex, a multiprotein complex that terminates RNA polymerase II (Pol II) transcription in the promoter-proximal region of genes. The integrator complex provides a quality checkpoint during transcription elongation by driving premature transcription termination of transcripts that are unfavorably configured for transcriptional elongation: the complex terminates transcription by (1) catalyzing dephosphorylation of the C-terminal domain (CTD) of Pol II subunit Polr2A/Rbp1 and Spt5, and (2) degrading the exiting nascent RNA transcript via endonuclease activity. The integrator complex is also involved in the 3'-end processing of the U7 snRNA, and also the spliceosomal snRNAs U1, U2, U4 and U5.</text>
</comment>
<comment type="subunit">
    <text evidence="1">Belongs to the multiprotein complex Integrator, at least composed of IntS1, IntS2, IntS3, IntS4, omd/IntS5, IntS6, defl/IntS7, IntS8, IntS9, IntS10, IntS11, IntS12, asun/IntS13, IntS14 and IntS15. The core complex associates with protein phosphatase 2A subunits mts/PP2A and Pp2A-29B, to form the Integrator-PP2A (INTAC) complex.</text>
</comment>
<comment type="subcellular location">
    <subcellularLocation>
        <location evidence="1">Nucleus</location>
    </subcellularLocation>
    <subcellularLocation>
        <location evidence="1">Cytoplasm</location>
    </subcellularLocation>
    <subcellularLocation>
        <location evidence="1">Cytoplasm</location>
        <location evidence="1">Perinuclear region</location>
    </subcellularLocation>
    <text evidence="1">Colocalizes with dynein-dynactin on the nuclear surface at the meiotic G2/prophase transition in primary spermatocytes. Nuclear location is required for recruitment of dynein motors to nuclear envelope at G2/M.</text>
</comment>
<comment type="PTM">
    <text evidence="1">Phosphorylated.</text>
</comment>
<comment type="similarity">
    <text evidence="4">Belongs to the Integrator subunit 13 family.</text>
</comment>
<accession>Q295U5</accession>
<proteinExistence type="inferred from homology"/>
<organism>
    <name type="scientific">Drosophila pseudoobscura pseudoobscura</name>
    <name type="common">Fruit fly</name>
    <dbReference type="NCBI Taxonomy" id="46245"/>
    <lineage>
        <taxon>Eukaryota</taxon>
        <taxon>Metazoa</taxon>
        <taxon>Ecdysozoa</taxon>
        <taxon>Arthropoda</taxon>
        <taxon>Hexapoda</taxon>
        <taxon>Insecta</taxon>
        <taxon>Pterygota</taxon>
        <taxon>Neoptera</taxon>
        <taxon>Endopterygota</taxon>
        <taxon>Diptera</taxon>
        <taxon>Brachycera</taxon>
        <taxon>Muscomorpha</taxon>
        <taxon>Ephydroidea</taxon>
        <taxon>Drosophilidae</taxon>
        <taxon>Drosophila</taxon>
        <taxon>Sophophora</taxon>
    </lineage>
</organism>
<reference evidence="5" key="1">
    <citation type="journal article" date="2005" name="Genome Res.">
        <title>Comparative genome sequencing of Drosophila pseudoobscura: chromosomal, gene, and cis-element evolution.</title>
        <authorList>
            <person name="Richards S."/>
            <person name="Liu Y."/>
            <person name="Bettencourt B.R."/>
            <person name="Hradecky P."/>
            <person name="Letovsky S."/>
            <person name="Nielsen R."/>
            <person name="Thornton K."/>
            <person name="Hubisz M.J."/>
            <person name="Chen R."/>
            <person name="Meisel R.P."/>
            <person name="Couronne O."/>
            <person name="Hua S."/>
            <person name="Smith M.A."/>
            <person name="Zhang P."/>
            <person name="Liu J."/>
            <person name="Bussemaker H.J."/>
            <person name="van Batenburg M.F."/>
            <person name="Howells S.L."/>
            <person name="Scherer S.E."/>
            <person name="Sodergren E."/>
            <person name="Matthews B.B."/>
            <person name="Crosby M.A."/>
            <person name="Schroeder A.J."/>
            <person name="Ortiz-Barrientos D."/>
            <person name="Rives C.M."/>
            <person name="Metzker M.L."/>
            <person name="Muzny D.M."/>
            <person name="Scott G."/>
            <person name="Steffen D."/>
            <person name="Wheeler D.A."/>
            <person name="Worley K.C."/>
            <person name="Havlak P."/>
            <person name="Durbin K.J."/>
            <person name="Egan A."/>
            <person name="Gill R."/>
            <person name="Hume J."/>
            <person name="Morgan M.B."/>
            <person name="Miner G."/>
            <person name="Hamilton C."/>
            <person name="Huang Y."/>
            <person name="Waldron L."/>
            <person name="Verduzco D."/>
            <person name="Clerc-Blankenburg K.P."/>
            <person name="Dubchak I."/>
            <person name="Noor M.A.F."/>
            <person name="Anderson W."/>
            <person name="White K.P."/>
            <person name="Clark A.G."/>
            <person name="Schaeffer S.W."/>
            <person name="Gelbart W.M."/>
            <person name="Weinstock G.M."/>
            <person name="Gibbs R.A."/>
        </authorList>
    </citation>
    <scope>NUCLEOTIDE SEQUENCE [LARGE SCALE GENOMIC DNA]</scope>
    <source>
        <strain>MV2-25 / Tucson 14011-0121.94</strain>
    </source>
</reference>
<sequence>MFERNQKTIFVLDHTRYFSIASEEYISMDFLKGKPSAHSSAGGSSQFSKSLWTCACESSIEYCRVVWDLFPGKKHVRFIVSDTAAHIVNTWSASTQNMSHVMNAMVMVGVPSRSMPQSSDYSVIHGLRAAIEALAEPTDEQSQAMASGVPDDLILNEGRVICITSARDNTSMKSLEDIFNTVLIQQNVLSATPPKKGLGINHCHLVILNIVPLGIDSMVTNRNLLEISPLLDVEIHTVGAPDISYKLTHLILDHYDLASTTVTNIPMKEEQNANSSANYDVEILHSRRAHSITCGPDFSLPTSIKQGATYETVTLKWCTPRGCGSADLQPCLGQFLVTPVDVTSRPSSCLINFLLNGRSVLLEMPRKTGSKATSHMLSARGGEIFIHSLCITRSCMDEAPSIADGPGGRVNDYRTSELGQLMKMSRMVPLKSRDPAAPNLPRRLPRYFPLTTTSTVLFHLQRHLSWLPHFLHLLVKEMDKQDEVRCQQHIHELYKSASRGDVLPFTHTNGARLKPHKAKDQYRLLYRELEQLIQLNASTVHHKNLLESLQTLRAAYGDAPSKSEAGTANLRSFTESPLSPERLEAMSNVSISSSTNSNSLLKASKRRMSNCGTRSLLDIISSAERSQSNKRLDFSGRICTPIGQIAKLYPDFGNKEKDAAAAAAASGVGVAPKE</sequence>
<dbReference type="EMBL" id="CM000070">
    <property type="protein sequence ID" value="EAL28613.1"/>
    <property type="molecule type" value="Genomic_DNA"/>
</dbReference>
<dbReference type="RefSeq" id="XP_001359467.1">
    <property type="nucleotide sequence ID" value="XM_001359430.2"/>
</dbReference>
<dbReference type="SMR" id="Q295U5"/>
<dbReference type="FunCoup" id="Q295U5">
    <property type="interactions" value="2405"/>
</dbReference>
<dbReference type="STRING" id="46245.Q295U5"/>
<dbReference type="EnsemblMetazoa" id="FBtr0283049">
    <property type="protein sequence ID" value="FBpp0281487"/>
    <property type="gene ID" value="FBgn0079875"/>
</dbReference>
<dbReference type="GeneID" id="4802572"/>
<dbReference type="KEGG" id="dpo:4802572"/>
<dbReference type="CTD" id="41971"/>
<dbReference type="eggNOG" id="KOG3711">
    <property type="taxonomic scope" value="Eukaryota"/>
</dbReference>
<dbReference type="HOGENOM" id="CLU_012654_1_0_1"/>
<dbReference type="InParanoid" id="Q295U5"/>
<dbReference type="OMA" id="NCTAMHR"/>
<dbReference type="PhylomeDB" id="Q295U5"/>
<dbReference type="Proteomes" id="UP000001819">
    <property type="component" value="Chromosome 2"/>
</dbReference>
<dbReference type="Bgee" id="FBgn0079875">
    <property type="expression patterns" value="Expressed in female reproductive system and 2 other cell types or tissues"/>
</dbReference>
<dbReference type="GO" id="GO:0005737">
    <property type="term" value="C:cytoplasm"/>
    <property type="evidence" value="ECO:0000250"/>
    <property type="project" value="UniProtKB"/>
</dbReference>
<dbReference type="GO" id="GO:0032039">
    <property type="term" value="C:integrator complex"/>
    <property type="evidence" value="ECO:0007669"/>
    <property type="project" value="TreeGrafter"/>
</dbReference>
<dbReference type="GO" id="GO:0005634">
    <property type="term" value="C:nucleus"/>
    <property type="evidence" value="ECO:0000250"/>
    <property type="project" value="UniProtKB"/>
</dbReference>
<dbReference type="GO" id="GO:0048471">
    <property type="term" value="C:perinuclear region of cytoplasm"/>
    <property type="evidence" value="ECO:0007669"/>
    <property type="project" value="UniProtKB-SubCell"/>
</dbReference>
<dbReference type="GO" id="GO:0030154">
    <property type="term" value="P:cell differentiation"/>
    <property type="evidence" value="ECO:0007669"/>
    <property type="project" value="UniProtKB-KW"/>
</dbReference>
<dbReference type="GO" id="GO:0051301">
    <property type="term" value="P:cell division"/>
    <property type="evidence" value="ECO:0007669"/>
    <property type="project" value="UniProtKB-KW"/>
</dbReference>
<dbReference type="GO" id="GO:0051642">
    <property type="term" value="P:centrosome localization"/>
    <property type="evidence" value="ECO:0007669"/>
    <property type="project" value="TreeGrafter"/>
</dbReference>
<dbReference type="GO" id="GO:0030317">
    <property type="term" value="P:flagellated sperm motility"/>
    <property type="evidence" value="ECO:0000250"/>
    <property type="project" value="UniProtKB"/>
</dbReference>
<dbReference type="GO" id="GO:0051321">
    <property type="term" value="P:meiotic cell cycle"/>
    <property type="evidence" value="ECO:0007669"/>
    <property type="project" value="UniProtKB-KW"/>
</dbReference>
<dbReference type="GO" id="GO:0080154">
    <property type="term" value="P:regulation of fertilization"/>
    <property type="evidence" value="ECO:0000250"/>
    <property type="project" value="UniProtKB"/>
</dbReference>
<dbReference type="GO" id="GO:0007346">
    <property type="term" value="P:regulation of mitotic cell cycle"/>
    <property type="evidence" value="ECO:0000250"/>
    <property type="project" value="UniProtKB"/>
</dbReference>
<dbReference type="GO" id="GO:0007283">
    <property type="term" value="P:spermatogenesis"/>
    <property type="evidence" value="ECO:0007669"/>
    <property type="project" value="UniProtKB-KW"/>
</dbReference>
<dbReference type="InterPro" id="IPR019355">
    <property type="entry name" value="Cell_cycle_regulator_Mat89Bb"/>
</dbReference>
<dbReference type="PANTHER" id="PTHR12955:SF1">
    <property type="entry name" value="INTEGRATOR COMPLEX SUBUNIT 13"/>
    <property type="match status" value="1"/>
</dbReference>
<dbReference type="PANTHER" id="PTHR12955">
    <property type="entry name" value="SARCOMA ANTIGEN NY-SAR-95-RELATED"/>
    <property type="match status" value="1"/>
</dbReference>
<dbReference type="Pfam" id="PF10221">
    <property type="entry name" value="Mat89Bb"/>
    <property type="match status" value="1"/>
</dbReference>
<name>INT13_DROPS</name>